<keyword id="KW-0007">Acetylation</keyword>
<keyword id="KW-0966">Cell projection</keyword>
<keyword id="KW-0969">Cilium</keyword>
<keyword id="KW-0963">Cytoplasm</keyword>
<keyword id="KW-0206">Cytoskeleton</keyword>
<keyword id="KW-0903">Direct protein sequencing</keyword>
<keyword id="KW-0282">Flagellum</keyword>
<keyword id="KW-0342">GTP-binding</keyword>
<keyword id="KW-1017">Isopeptide bond</keyword>
<keyword id="KW-0460">Magnesium</keyword>
<keyword id="KW-0479">Metal-binding</keyword>
<keyword id="KW-0493">Microtubule</keyword>
<keyword id="KW-0547">Nucleotide-binding</keyword>
<keyword id="KW-0597">Phosphoprotein</keyword>
<keyword id="KW-1185">Reference proteome</keyword>
<comment type="function">
    <text>Tubulin is the major constituent of microtubules, a cylinder consisting of laterally associated linear protofilaments composed of alpha- and beta-tubulin heterodimers. Microtubules grow by the addition of GTP-tubulin dimers to the microtubule end, where a stabilizing cap forms. Below the cap, tubulin dimers are in GDP-bound state, owing to GTPase activity of alpha-tubulin.</text>
</comment>
<comment type="cofactor">
    <cofactor evidence="3">
        <name>Mg(2+)</name>
        <dbReference type="ChEBI" id="CHEBI:18420"/>
    </cofactor>
</comment>
<comment type="subunit">
    <text evidence="5">Dimer of alpha and beta chains. A typical microtubule is a hollow water-filled tube with an outer diameter of 25 nm and an inner diameter of 15 nM. Alpha-beta heterodimers associate head-to-tail to form protofilaments running lengthwise along the microtubule wall with the beta-tubulin subunit facing the microtubule plus end conferring a structural polarity. Microtubules usually have 13 protofilaments but different protofilament numbers can be found in some organisms and specialized cells. Component of sperm flagellar doublet microtubules.</text>
</comment>
<comment type="subcellular location">
    <subcellularLocation>
        <location evidence="5">Cytoplasm</location>
        <location evidence="5">Cytoskeleton</location>
    </subcellularLocation>
    <subcellularLocation>
        <location evidence="5">Cytoplasm</location>
        <location evidence="5">Cytoskeleton</location>
        <location evidence="5">Flagellum axoneme</location>
    </subcellularLocation>
</comment>
<comment type="domain">
    <text evidence="1">The highly acidic C-terminal region may bind cations such as calcium.</text>
</comment>
<comment type="domain">
    <text evidence="2">The MREI motif is common among all beta-tubulin isoforms and may be critical for tubulin autoregulation.</text>
</comment>
<comment type="PTM">
    <text evidence="5">Some glutamate residues at the C-terminus are polyglycylated, resulting in polyglycine chains on the gamma-carboxyl group. Glycylation is mainly limited to tubulin incorporated into axonemes (cilia and flagella) whereas glutamylation is prevalent in neuronal cells, centrioles, axonemes, and the mitotic spindle. Both modifications can coexist on the same protein on adjacent residues, and lowering polyglycylation levels increases polyglutamylation, and reciprocally. Cilia and flagella glycylation is required for their stability and maintenance. Flagella glycylation controls sperm motility.</text>
</comment>
<comment type="PTM">
    <text evidence="5 8">Some glutamate residues at the C-terminus are polyglutamylated, resulting in polyglutamate chains on the gamma-carboxyl group (By similarity). Polyglutamylation plays a key role in microtubule severing by spastin (SPAST). SPAST preferentially recognizes and acts on microtubules decorated with short polyglutamate tails: severing activity by SPAST increases as the number of glutamates per tubulin rises from one to eight, but decreases beyond this glutamylation threshold (By similarity). Glutamylation is also involved in cilia motility (By similarity).</text>
</comment>
<comment type="PTM">
    <text evidence="4">Phosphorylated on Ser-172 by CDK1 during the cell cycle, from metaphase to telophase, but not in interphase. This phosphorylation inhibits tubulin incorporation into microtubules.</text>
</comment>
<comment type="similarity">
    <text evidence="10">Belongs to the tubulin family.</text>
</comment>
<feature type="chain" id="PRO_0000270755" description="Tubulin beta-4B chain">
    <location>
        <begin position="1"/>
        <end position="445"/>
    </location>
</feature>
<feature type="region of interest" description="Disordered" evidence="9">
    <location>
        <begin position="426"/>
        <end position="445"/>
    </location>
</feature>
<feature type="short sequence motif" description="MREI motif" evidence="2">
    <location>
        <begin position="1"/>
        <end position="4"/>
    </location>
</feature>
<feature type="compositionally biased region" description="Acidic residues" evidence="9">
    <location>
        <begin position="429"/>
        <end position="445"/>
    </location>
</feature>
<feature type="binding site" evidence="6">
    <location>
        <position position="11"/>
    </location>
    <ligand>
        <name>GTP</name>
        <dbReference type="ChEBI" id="CHEBI:37565"/>
    </ligand>
</feature>
<feature type="binding site" evidence="3">
    <location>
        <position position="69"/>
    </location>
    <ligand>
        <name>GTP</name>
        <dbReference type="ChEBI" id="CHEBI:37565"/>
    </ligand>
</feature>
<feature type="binding site" evidence="3">
    <location>
        <position position="69"/>
    </location>
    <ligand>
        <name>Mg(2+)</name>
        <dbReference type="ChEBI" id="CHEBI:18420"/>
    </ligand>
</feature>
<feature type="binding site" evidence="6">
    <location>
        <position position="138"/>
    </location>
    <ligand>
        <name>GTP</name>
        <dbReference type="ChEBI" id="CHEBI:37565"/>
    </ligand>
</feature>
<feature type="binding site" evidence="6">
    <location>
        <position position="142"/>
    </location>
    <ligand>
        <name>GTP</name>
        <dbReference type="ChEBI" id="CHEBI:37565"/>
    </ligand>
</feature>
<feature type="binding site" evidence="6">
    <location>
        <position position="143"/>
    </location>
    <ligand>
        <name>GTP</name>
        <dbReference type="ChEBI" id="CHEBI:37565"/>
    </ligand>
</feature>
<feature type="binding site" evidence="6">
    <location>
        <position position="144"/>
    </location>
    <ligand>
        <name>GTP</name>
        <dbReference type="ChEBI" id="CHEBI:37565"/>
    </ligand>
</feature>
<feature type="binding site" evidence="6">
    <location>
        <position position="204"/>
    </location>
    <ligand>
        <name>GTP</name>
        <dbReference type="ChEBI" id="CHEBI:37565"/>
    </ligand>
</feature>
<feature type="binding site" evidence="6">
    <location>
        <position position="226"/>
    </location>
    <ligand>
        <name>GTP</name>
        <dbReference type="ChEBI" id="CHEBI:37565"/>
    </ligand>
</feature>
<feature type="modified residue" description="Phosphothreonine" evidence="11">
    <location>
        <position position="55"/>
    </location>
</feature>
<feature type="modified residue" description="N6-acetyllysine" evidence="4">
    <location>
        <position position="58"/>
    </location>
</feature>
<feature type="modified residue" description="Phosphoserine; by CDK1" evidence="4">
    <location>
        <position position="172"/>
    </location>
</feature>
<feature type="modified residue" description="5-glutamyl polyglutamate" evidence="7">
    <location>
        <position position="438"/>
    </location>
</feature>
<organism>
    <name type="scientific">Rattus norvegicus</name>
    <name type="common">Rat</name>
    <dbReference type="NCBI Taxonomy" id="10116"/>
    <lineage>
        <taxon>Eukaryota</taxon>
        <taxon>Metazoa</taxon>
        <taxon>Chordata</taxon>
        <taxon>Craniata</taxon>
        <taxon>Vertebrata</taxon>
        <taxon>Euteleostomi</taxon>
        <taxon>Mammalia</taxon>
        <taxon>Eutheria</taxon>
        <taxon>Euarchontoglires</taxon>
        <taxon>Glires</taxon>
        <taxon>Rodentia</taxon>
        <taxon>Myomorpha</taxon>
        <taxon>Muroidea</taxon>
        <taxon>Muridae</taxon>
        <taxon>Murinae</taxon>
        <taxon>Rattus</taxon>
    </lineage>
</organism>
<accession>Q6P9T8</accession>
<evidence type="ECO:0000250" key="1"/>
<evidence type="ECO:0000250" key="2">
    <source>
        <dbReference type="UniProtKB" id="P07437"/>
    </source>
</evidence>
<evidence type="ECO:0000250" key="3">
    <source>
        <dbReference type="UniProtKB" id="P68363"/>
    </source>
</evidence>
<evidence type="ECO:0000250" key="4">
    <source>
        <dbReference type="UniProtKB" id="P68371"/>
    </source>
</evidence>
<evidence type="ECO:0000250" key="5">
    <source>
        <dbReference type="UniProtKB" id="P68372"/>
    </source>
</evidence>
<evidence type="ECO:0000250" key="6">
    <source>
        <dbReference type="UniProtKB" id="Q13509"/>
    </source>
</evidence>
<evidence type="ECO:0000250" key="7">
    <source>
        <dbReference type="UniProtKB" id="Q2T9S0"/>
    </source>
</evidence>
<evidence type="ECO:0000250" key="8">
    <source>
        <dbReference type="UniProtKB" id="Q71U36"/>
    </source>
</evidence>
<evidence type="ECO:0000256" key="9">
    <source>
        <dbReference type="SAM" id="MobiDB-lite"/>
    </source>
</evidence>
<evidence type="ECO:0000305" key="10"/>
<evidence type="ECO:0007744" key="11">
    <source>
    </source>
</evidence>
<sequence>MREIVHLQAGQCGNQIGAKFWEVISDEHGIDPTGTYHGDSDLQLERINVYYNEATGGKYVPRAVLVDLEPGTMDSVRSGPFGQIFRPDNFVFGQSGAGNNWAKGHYTEGAELVDSVLDVVRKEAESCDCLQGFQLTHSLGGGTGSGMGTLLISKIREEYPDRIMNTFSVVPSPKVSDTVVEPYNATLSVHQLVENTDETYCIDNEALYDICFRTLKLTTPTYGDLNHLVSATMSGVTACLRFPGQLNADLRKLAVNMVPFPRLHFFMPGFAPLTSRGSQQYRALTVPELTQQMFDAKNMMAACDPRHGRYLTVAAVFRGRMSMKEVDEQMLNVQNKNSSYFVEWIPNNVKTAVCDIPPRGLKMSATFIGNSTAIQELFKRISEQFTAMFRRKAFLHWYTGEGMDEMEFTEAESNMNDLVSEYQQYQDATAEEEGEFEEEAEEEVA</sequence>
<reference key="1">
    <citation type="journal article" date="2004" name="Genome Res.">
        <title>The status, quality, and expansion of the NIH full-length cDNA project: the Mammalian Gene Collection (MGC).</title>
        <authorList>
            <consortium name="The MGC Project Team"/>
        </authorList>
    </citation>
    <scope>NUCLEOTIDE SEQUENCE [LARGE SCALE MRNA]</scope>
    <source>
        <tissue>Pituitary</tissue>
    </source>
</reference>
<reference key="2">
    <citation type="submission" date="2009-01" db="UniProtKB">
        <authorList>
            <person name="Lubec G."/>
            <person name="Afjehi-Sadat L."/>
            <person name="Chen W.-Q."/>
        </authorList>
    </citation>
    <scope>PROTEIN SEQUENCE OF 3-19; 47-58; 78-121; 242-252; 263-276; 363-379 AND 381-390</scope>
    <scope>IDENTIFICATION BY MASS SPECTROMETRY</scope>
    <source>
        <strain>Sprague-Dawley</strain>
        <tissue>Hippocampus</tissue>
        <tissue>Spinal cord</tissue>
    </source>
</reference>
<reference key="3">
    <citation type="journal article" date="2012" name="Nat. Commun.">
        <title>Quantitative maps of protein phosphorylation sites across 14 different rat organs and tissues.</title>
        <authorList>
            <person name="Lundby A."/>
            <person name="Secher A."/>
            <person name="Lage K."/>
            <person name="Nordsborg N.B."/>
            <person name="Dmytriyev A."/>
            <person name="Lundby C."/>
            <person name="Olsen J.V."/>
        </authorList>
    </citation>
    <scope>PHOSPHORYLATION [LARGE SCALE ANALYSIS] AT THR-55</scope>
    <scope>IDENTIFICATION BY MASS SPECTROMETRY [LARGE SCALE ANALYSIS]</scope>
</reference>
<proteinExistence type="evidence at protein level"/>
<name>TBB4B_RAT</name>
<dbReference type="EMBL" id="BC060597">
    <property type="protein sequence ID" value="AAH60597.1"/>
    <property type="molecule type" value="mRNA"/>
</dbReference>
<dbReference type="RefSeq" id="NP_954525.1">
    <property type="nucleotide sequence ID" value="NM_199094.2"/>
</dbReference>
<dbReference type="SMR" id="Q6P9T8"/>
<dbReference type="BioGRID" id="255395">
    <property type="interactions" value="15"/>
</dbReference>
<dbReference type="FunCoup" id="Q6P9T8">
    <property type="interactions" value="1813"/>
</dbReference>
<dbReference type="IntAct" id="Q6P9T8">
    <property type="interactions" value="6"/>
</dbReference>
<dbReference type="MINT" id="Q6P9T8"/>
<dbReference type="STRING" id="10116.ENSRNOP00000065633"/>
<dbReference type="GlyGen" id="Q6P9T8">
    <property type="glycosylation" value="1 site, 1 O-linked glycan (1 site)"/>
</dbReference>
<dbReference type="iPTMnet" id="Q6P9T8"/>
<dbReference type="PhosphoSitePlus" id="Q6P9T8"/>
<dbReference type="jPOST" id="Q6P9T8"/>
<dbReference type="PaxDb" id="10116-ENSRNOP00000013863"/>
<dbReference type="GeneID" id="296554"/>
<dbReference type="KEGG" id="rno:296554"/>
<dbReference type="UCSC" id="RGD:735101">
    <property type="organism name" value="rat"/>
</dbReference>
<dbReference type="AGR" id="RGD:619730"/>
<dbReference type="AGR" id="RGD:735101"/>
<dbReference type="CTD" id="10383"/>
<dbReference type="RGD" id="735101">
    <property type="gene designation" value="Tubb4b"/>
</dbReference>
<dbReference type="eggNOG" id="KOG1375">
    <property type="taxonomic scope" value="Eukaryota"/>
</dbReference>
<dbReference type="InParanoid" id="Q6P9T8"/>
<dbReference type="PhylomeDB" id="Q6P9T8"/>
<dbReference type="Reactome" id="R-RNO-190840">
    <property type="pathway name" value="Microtubule-dependent trafficking of connexons from Golgi to the plasma membrane"/>
</dbReference>
<dbReference type="Reactome" id="R-RNO-2132295">
    <property type="pathway name" value="MHC class II antigen presentation"/>
</dbReference>
<dbReference type="Reactome" id="R-RNO-2467813">
    <property type="pathway name" value="Separation of Sister Chromatids"/>
</dbReference>
<dbReference type="Reactome" id="R-RNO-2500257">
    <property type="pathway name" value="Resolution of Sister Chromatid Cohesion"/>
</dbReference>
<dbReference type="Reactome" id="R-RNO-2565942">
    <property type="pathway name" value="Regulation of PLK1 Activity at G2/M Transition"/>
</dbReference>
<dbReference type="Reactome" id="R-RNO-3371497">
    <property type="pathway name" value="HSP90 chaperone cycle for steroid hormone receptors (SHR) in the presence of ligand"/>
</dbReference>
<dbReference type="Reactome" id="R-RNO-380259">
    <property type="pathway name" value="Loss of Nlp from mitotic centrosomes"/>
</dbReference>
<dbReference type="Reactome" id="R-RNO-380270">
    <property type="pathway name" value="Recruitment of mitotic centrosome proteins and complexes"/>
</dbReference>
<dbReference type="Reactome" id="R-RNO-380284">
    <property type="pathway name" value="Loss of proteins required for interphase microtubule organization from the centrosome"/>
</dbReference>
<dbReference type="Reactome" id="R-RNO-380320">
    <property type="pathway name" value="Recruitment of NuMA to mitotic centrosomes"/>
</dbReference>
<dbReference type="Reactome" id="R-RNO-437239">
    <property type="pathway name" value="Recycling pathway of L1"/>
</dbReference>
<dbReference type="Reactome" id="R-RNO-5610787">
    <property type="pathway name" value="Hedgehog 'off' state"/>
</dbReference>
<dbReference type="Reactome" id="R-RNO-5617833">
    <property type="pathway name" value="Cilium Assembly"/>
</dbReference>
<dbReference type="Reactome" id="R-RNO-5620912">
    <property type="pathway name" value="Anchoring of the basal body to the plasma membrane"/>
</dbReference>
<dbReference type="Reactome" id="R-RNO-5620924">
    <property type="pathway name" value="Intraflagellar transport"/>
</dbReference>
<dbReference type="Reactome" id="R-RNO-5626467">
    <property type="pathway name" value="RHO GTPases activate IQGAPs"/>
</dbReference>
<dbReference type="Reactome" id="R-RNO-5663220">
    <property type="pathway name" value="RHO GTPases Activate Formins"/>
</dbReference>
<dbReference type="Reactome" id="R-RNO-6798695">
    <property type="pathway name" value="Neutrophil degranulation"/>
</dbReference>
<dbReference type="Reactome" id="R-RNO-6807878">
    <property type="pathway name" value="COPI-mediated anterograde transport"/>
</dbReference>
<dbReference type="Reactome" id="R-RNO-6811434">
    <property type="pathway name" value="COPI-dependent Golgi-to-ER retrograde traffic"/>
</dbReference>
<dbReference type="Reactome" id="R-RNO-6811436">
    <property type="pathway name" value="COPI-independent Golgi-to-ER retrograde traffic"/>
</dbReference>
<dbReference type="Reactome" id="R-RNO-68877">
    <property type="pathway name" value="Mitotic Prometaphase"/>
</dbReference>
<dbReference type="Reactome" id="R-RNO-8852276">
    <property type="pathway name" value="The role of GTSE1 in G2/M progression after G2 checkpoint"/>
</dbReference>
<dbReference type="Reactome" id="R-RNO-8854518">
    <property type="pathway name" value="AURKA Activation by TPX2"/>
</dbReference>
<dbReference type="Reactome" id="R-RNO-8955332">
    <property type="pathway name" value="Carboxyterminal post-translational modifications of tubulin"/>
</dbReference>
<dbReference type="Reactome" id="R-RNO-9646399">
    <property type="pathway name" value="Aggrephagy"/>
</dbReference>
<dbReference type="Reactome" id="R-RNO-9648025">
    <property type="pathway name" value="EML4 and NUDC in mitotic spindle formation"/>
</dbReference>
<dbReference type="Reactome" id="R-RNO-9668328">
    <property type="pathway name" value="Sealing of the nuclear envelope (NE) by ESCRT-III"/>
</dbReference>
<dbReference type="Reactome" id="R-RNO-983189">
    <property type="pathway name" value="Kinesins"/>
</dbReference>
<dbReference type="Reactome" id="R-RNO-9833482">
    <property type="pathway name" value="PKR-mediated signaling"/>
</dbReference>
<dbReference type="PRO" id="PR:Q6P9T8"/>
<dbReference type="Proteomes" id="UP000002494">
    <property type="component" value="Unplaced"/>
</dbReference>
<dbReference type="GO" id="GO:0005879">
    <property type="term" value="C:axonemal microtubule"/>
    <property type="evidence" value="ECO:0000266"/>
    <property type="project" value="RGD"/>
</dbReference>
<dbReference type="GO" id="GO:0005737">
    <property type="term" value="C:cytoplasm"/>
    <property type="evidence" value="ECO:0000318"/>
    <property type="project" value="GO_Central"/>
</dbReference>
<dbReference type="GO" id="GO:0005874">
    <property type="term" value="C:microtubule"/>
    <property type="evidence" value="ECO:0000266"/>
    <property type="project" value="RGD"/>
</dbReference>
<dbReference type="GO" id="GO:0036126">
    <property type="term" value="C:sperm flagellum"/>
    <property type="evidence" value="ECO:0000266"/>
    <property type="project" value="RGD"/>
</dbReference>
<dbReference type="GO" id="GO:0003725">
    <property type="term" value="F:double-stranded RNA binding"/>
    <property type="evidence" value="ECO:0000266"/>
    <property type="project" value="RGD"/>
</dbReference>
<dbReference type="GO" id="GO:0005525">
    <property type="term" value="F:GTP binding"/>
    <property type="evidence" value="ECO:0000318"/>
    <property type="project" value="GO_Central"/>
</dbReference>
<dbReference type="GO" id="GO:0003924">
    <property type="term" value="F:GTPase activity"/>
    <property type="evidence" value="ECO:0007669"/>
    <property type="project" value="InterPro"/>
</dbReference>
<dbReference type="GO" id="GO:0046872">
    <property type="term" value="F:metal ion binding"/>
    <property type="evidence" value="ECO:0007669"/>
    <property type="project" value="UniProtKB-KW"/>
</dbReference>
<dbReference type="GO" id="GO:0005200">
    <property type="term" value="F:structural constituent of cytoskeleton"/>
    <property type="evidence" value="ECO:0000318"/>
    <property type="project" value="GO_Central"/>
</dbReference>
<dbReference type="GO" id="GO:0030317">
    <property type="term" value="P:flagellated sperm motility"/>
    <property type="evidence" value="ECO:0000266"/>
    <property type="project" value="RGD"/>
</dbReference>
<dbReference type="GO" id="GO:0000226">
    <property type="term" value="P:microtubule cytoskeleton organization"/>
    <property type="evidence" value="ECO:0000318"/>
    <property type="project" value="GO_Central"/>
</dbReference>
<dbReference type="GO" id="GO:0000278">
    <property type="term" value="P:mitotic cell cycle"/>
    <property type="evidence" value="ECO:0000318"/>
    <property type="project" value="GO_Central"/>
</dbReference>
<dbReference type="CDD" id="cd02187">
    <property type="entry name" value="beta_tubulin"/>
    <property type="match status" value="1"/>
</dbReference>
<dbReference type="FunFam" id="1.10.287.600:FF:000006">
    <property type="entry name" value="Tubulin beta chain"/>
    <property type="match status" value="1"/>
</dbReference>
<dbReference type="FunFam" id="3.30.1330.20:FF:000002">
    <property type="entry name" value="Tubulin beta chain"/>
    <property type="match status" value="1"/>
</dbReference>
<dbReference type="FunFam" id="3.40.50.1440:FF:000003">
    <property type="entry name" value="Tubulin beta chain"/>
    <property type="match status" value="1"/>
</dbReference>
<dbReference type="Gene3D" id="1.10.287.600">
    <property type="entry name" value="Helix hairpin bin"/>
    <property type="match status" value="1"/>
</dbReference>
<dbReference type="Gene3D" id="3.30.1330.20">
    <property type="entry name" value="Tubulin/FtsZ, C-terminal domain"/>
    <property type="match status" value="1"/>
</dbReference>
<dbReference type="Gene3D" id="3.40.50.1440">
    <property type="entry name" value="Tubulin/FtsZ, GTPase domain"/>
    <property type="match status" value="1"/>
</dbReference>
<dbReference type="InterPro" id="IPR013838">
    <property type="entry name" value="Beta-tubulin_BS"/>
</dbReference>
<dbReference type="InterPro" id="IPR002453">
    <property type="entry name" value="Beta_tubulin"/>
</dbReference>
<dbReference type="InterPro" id="IPR008280">
    <property type="entry name" value="Tub_FtsZ_C"/>
</dbReference>
<dbReference type="InterPro" id="IPR000217">
    <property type="entry name" value="Tubulin"/>
</dbReference>
<dbReference type="InterPro" id="IPR037103">
    <property type="entry name" value="Tubulin/FtsZ-like_C"/>
</dbReference>
<dbReference type="InterPro" id="IPR018316">
    <property type="entry name" value="Tubulin/FtsZ_2-layer-sand-dom"/>
</dbReference>
<dbReference type="InterPro" id="IPR036525">
    <property type="entry name" value="Tubulin/FtsZ_GTPase_sf"/>
</dbReference>
<dbReference type="InterPro" id="IPR023123">
    <property type="entry name" value="Tubulin_C"/>
</dbReference>
<dbReference type="InterPro" id="IPR017975">
    <property type="entry name" value="Tubulin_CS"/>
</dbReference>
<dbReference type="InterPro" id="IPR003008">
    <property type="entry name" value="Tubulin_FtsZ_GTPase"/>
</dbReference>
<dbReference type="PANTHER" id="PTHR11588">
    <property type="entry name" value="TUBULIN"/>
    <property type="match status" value="1"/>
</dbReference>
<dbReference type="Pfam" id="PF00091">
    <property type="entry name" value="Tubulin"/>
    <property type="match status" value="1"/>
</dbReference>
<dbReference type="Pfam" id="PF03953">
    <property type="entry name" value="Tubulin_C"/>
    <property type="match status" value="1"/>
</dbReference>
<dbReference type="PRINTS" id="PR01163">
    <property type="entry name" value="BETATUBULIN"/>
</dbReference>
<dbReference type="PRINTS" id="PR01161">
    <property type="entry name" value="TUBULIN"/>
</dbReference>
<dbReference type="SMART" id="SM00864">
    <property type="entry name" value="Tubulin"/>
    <property type="match status" value="1"/>
</dbReference>
<dbReference type="SMART" id="SM00865">
    <property type="entry name" value="Tubulin_C"/>
    <property type="match status" value="1"/>
</dbReference>
<dbReference type="SUPFAM" id="SSF55307">
    <property type="entry name" value="Tubulin C-terminal domain-like"/>
    <property type="match status" value="1"/>
</dbReference>
<dbReference type="SUPFAM" id="SSF52490">
    <property type="entry name" value="Tubulin nucleotide-binding domain-like"/>
    <property type="match status" value="1"/>
</dbReference>
<dbReference type="PROSITE" id="PS00227">
    <property type="entry name" value="TUBULIN"/>
    <property type="match status" value="1"/>
</dbReference>
<dbReference type="PROSITE" id="PS00228">
    <property type="entry name" value="TUBULIN_B_AUTOREG"/>
    <property type="match status" value="1"/>
</dbReference>
<gene>
    <name type="primary">Tubb4b</name>
    <name type="synonym">Tubb2c</name>
</gene>
<protein>
    <recommendedName>
        <fullName>Tubulin beta-4B chain</fullName>
    </recommendedName>
    <alternativeName>
        <fullName>Tubulin beta-2C chain</fullName>
    </alternativeName>
</protein>